<reference key="1">
    <citation type="journal article" date="1991" name="Virology">
        <title>Isolation of replication-competent molecular clones of visna virus.</title>
        <authorList>
            <person name="Staskus K.A."/>
            <person name="Retzel E.F."/>
            <person name="Lewis E.D."/>
            <person name="Wietgrefe S.W."/>
            <person name="Silsby J.L."/>
            <person name="Cyr S."/>
            <person name="Rank J.M."/>
            <person name="Haase A.T."/>
            <person name="Fast D."/>
            <person name="Geiser P.T."/>
            <person name="Harty J.T."/>
            <person name="Kong S.H."/>
            <person name="Cook R."/>
            <person name="Lahti C.J."/>
            <person name="Neufeld T.P."/>
            <person name="Porter T.E."/>
            <person name="Shoop E."/>
            <person name="Zachow K.R."/>
        </authorList>
    </citation>
    <scope>NUCLEOTIDE SEQUENCE [GENOMIC RNA]</scope>
</reference>
<name>POL_VILV1</name>
<organism>
    <name type="scientific">Maedi visna virus (strain 1514 / clone LV1-1KS1)</name>
    <name type="common">MVV</name>
    <name type="synonym">Visna lentivirus</name>
    <dbReference type="NCBI Taxonomy" id="11743"/>
    <lineage>
        <taxon>Viruses</taxon>
        <taxon>Riboviria</taxon>
        <taxon>Pararnavirae</taxon>
        <taxon>Artverviricota</taxon>
        <taxon>Revtraviricetes</taxon>
        <taxon>Ortervirales</taxon>
        <taxon>Retroviridae</taxon>
        <taxon>Orthoretrovirinae</taxon>
        <taxon>Lentivirus</taxon>
        <taxon>Visna-maedi virus</taxon>
    </lineage>
</organism>
<accession>P23426</accession>
<dbReference type="EC" id="3.4.23.-" evidence="6"/>
<dbReference type="EC" id="2.7.7.49" evidence="7"/>
<dbReference type="EC" id="2.7.7.7" evidence="7"/>
<dbReference type="EC" id="3.1.26.4" evidence="8"/>
<dbReference type="EC" id="3.1.13.2"/>
<dbReference type="EC" id="3.6.1.23"/>
<dbReference type="EC" id="2.7.7.-" evidence="1"/>
<dbReference type="EC" id="3.1.-.-" evidence="1"/>
<dbReference type="EMBL" id="M60609">
    <property type="protein sequence ID" value="AAA17524.1"/>
    <property type="status" value="ALT_SEQ"/>
    <property type="molecule type" value="Unassigned_RNA"/>
</dbReference>
<dbReference type="SMR" id="P23426"/>
<dbReference type="MEROPS" id="A02.006"/>
<dbReference type="GO" id="GO:0019028">
    <property type="term" value="C:viral capsid"/>
    <property type="evidence" value="ECO:0007669"/>
    <property type="project" value="UniProtKB-KW"/>
</dbReference>
<dbReference type="GO" id="GO:0004190">
    <property type="term" value="F:aspartic-type endopeptidase activity"/>
    <property type="evidence" value="ECO:0007669"/>
    <property type="project" value="UniProtKB-KW"/>
</dbReference>
<dbReference type="GO" id="GO:0003677">
    <property type="term" value="F:DNA binding"/>
    <property type="evidence" value="ECO:0007669"/>
    <property type="project" value="UniProtKB-KW"/>
</dbReference>
<dbReference type="GO" id="GO:0003887">
    <property type="term" value="F:DNA-directed DNA polymerase activity"/>
    <property type="evidence" value="ECO:0007669"/>
    <property type="project" value="UniProtKB-EC"/>
</dbReference>
<dbReference type="GO" id="GO:0004170">
    <property type="term" value="F:dUTP diphosphatase activity"/>
    <property type="evidence" value="ECO:0007669"/>
    <property type="project" value="UniProtKB-EC"/>
</dbReference>
<dbReference type="GO" id="GO:0004533">
    <property type="term" value="F:exoribonuclease H activity"/>
    <property type="evidence" value="ECO:0007669"/>
    <property type="project" value="UniProtKB-EC"/>
</dbReference>
<dbReference type="GO" id="GO:0035613">
    <property type="term" value="F:RNA stem-loop binding"/>
    <property type="evidence" value="ECO:0007669"/>
    <property type="project" value="TreeGrafter"/>
</dbReference>
<dbReference type="GO" id="GO:0003964">
    <property type="term" value="F:RNA-directed DNA polymerase activity"/>
    <property type="evidence" value="ECO:0007669"/>
    <property type="project" value="UniProtKB-KW"/>
</dbReference>
<dbReference type="GO" id="GO:0004523">
    <property type="term" value="F:RNA-DNA hybrid ribonuclease activity"/>
    <property type="evidence" value="ECO:0007669"/>
    <property type="project" value="UniProtKB-EC"/>
</dbReference>
<dbReference type="GO" id="GO:0008270">
    <property type="term" value="F:zinc ion binding"/>
    <property type="evidence" value="ECO:0007669"/>
    <property type="project" value="UniProtKB-KW"/>
</dbReference>
<dbReference type="GO" id="GO:0015074">
    <property type="term" value="P:DNA integration"/>
    <property type="evidence" value="ECO:0007669"/>
    <property type="project" value="UniProtKB-KW"/>
</dbReference>
<dbReference type="GO" id="GO:0006310">
    <property type="term" value="P:DNA recombination"/>
    <property type="evidence" value="ECO:0007669"/>
    <property type="project" value="UniProtKB-KW"/>
</dbReference>
<dbReference type="GO" id="GO:0075713">
    <property type="term" value="P:establishment of integrated proviral latency"/>
    <property type="evidence" value="ECO:0007669"/>
    <property type="project" value="UniProtKB-KW"/>
</dbReference>
<dbReference type="GO" id="GO:0009117">
    <property type="term" value="P:nucleotide metabolic process"/>
    <property type="evidence" value="ECO:0007669"/>
    <property type="project" value="UniProtKB-KW"/>
</dbReference>
<dbReference type="GO" id="GO:0006508">
    <property type="term" value="P:proteolysis"/>
    <property type="evidence" value="ECO:0007669"/>
    <property type="project" value="UniProtKB-KW"/>
</dbReference>
<dbReference type="GO" id="GO:0046718">
    <property type="term" value="P:symbiont entry into host cell"/>
    <property type="evidence" value="ECO:0007669"/>
    <property type="project" value="UniProtKB-KW"/>
</dbReference>
<dbReference type="GO" id="GO:0044826">
    <property type="term" value="P:viral genome integration into host DNA"/>
    <property type="evidence" value="ECO:0007669"/>
    <property type="project" value="UniProtKB-KW"/>
</dbReference>
<dbReference type="GO" id="GO:0075523">
    <property type="term" value="P:viral translational frameshifting"/>
    <property type="evidence" value="ECO:0007669"/>
    <property type="project" value="UniProtKB-KW"/>
</dbReference>
<dbReference type="CDD" id="cd07557">
    <property type="entry name" value="trimeric_dUTPase"/>
    <property type="match status" value="1"/>
</dbReference>
<dbReference type="Gene3D" id="1.10.10.200">
    <property type="match status" value="1"/>
</dbReference>
<dbReference type="Gene3D" id="1.10.1200.30">
    <property type="match status" value="1"/>
</dbReference>
<dbReference type="Gene3D" id="2.70.40.10">
    <property type="match status" value="1"/>
</dbReference>
<dbReference type="Gene3D" id="3.30.70.270">
    <property type="match status" value="3"/>
</dbReference>
<dbReference type="Gene3D" id="2.40.70.10">
    <property type="entry name" value="Acid Proteases"/>
    <property type="match status" value="1"/>
</dbReference>
<dbReference type="Gene3D" id="3.10.10.10">
    <property type="entry name" value="HIV Type 1 Reverse Transcriptase, subunit A, domain 1"/>
    <property type="match status" value="1"/>
</dbReference>
<dbReference type="Gene3D" id="1.10.375.10">
    <property type="entry name" value="Human Immunodeficiency Virus Type 1 Capsid Protein"/>
    <property type="match status" value="1"/>
</dbReference>
<dbReference type="Gene3D" id="2.30.30.10">
    <property type="entry name" value="Integrase, C-terminal domain superfamily, retroviral"/>
    <property type="match status" value="1"/>
</dbReference>
<dbReference type="Gene3D" id="3.30.420.10">
    <property type="entry name" value="Ribonuclease H-like superfamily/Ribonuclease H"/>
    <property type="match status" value="2"/>
</dbReference>
<dbReference type="Gene3D" id="4.10.60.10">
    <property type="entry name" value="Zinc finger, CCHC-type"/>
    <property type="match status" value="1"/>
</dbReference>
<dbReference type="InterPro" id="IPR001969">
    <property type="entry name" value="Aspartic_peptidase_AS"/>
</dbReference>
<dbReference type="InterPro" id="IPR043502">
    <property type="entry name" value="DNA/RNA_pol_sf"/>
</dbReference>
<dbReference type="InterPro" id="IPR029054">
    <property type="entry name" value="dUTPase-like"/>
</dbReference>
<dbReference type="InterPro" id="IPR036157">
    <property type="entry name" value="dUTPase-like_sf"/>
</dbReference>
<dbReference type="InterPro" id="IPR033704">
    <property type="entry name" value="dUTPase_trimeric"/>
</dbReference>
<dbReference type="InterPro" id="IPR045345">
    <property type="entry name" value="Gag_p24_C"/>
</dbReference>
<dbReference type="InterPro" id="IPR017856">
    <property type="entry name" value="Integrase-like_N"/>
</dbReference>
<dbReference type="InterPro" id="IPR036862">
    <property type="entry name" value="Integrase_C_dom_sf_retrovir"/>
</dbReference>
<dbReference type="InterPro" id="IPR001037">
    <property type="entry name" value="Integrase_C_retrovir"/>
</dbReference>
<dbReference type="InterPro" id="IPR001584">
    <property type="entry name" value="Integrase_cat-core"/>
</dbReference>
<dbReference type="InterPro" id="IPR003308">
    <property type="entry name" value="Integrase_Zn-bd_dom_N"/>
</dbReference>
<dbReference type="InterPro" id="IPR001995">
    <property type="entry name" value="Peptidase_A2_cat"/>
</dbReference>
<dbReference type="InterPro" id="IPR021109">
    <property type="entry name" value="Peptidase_aspartic_dom_sf"/>
</dbReference>
<dbReference type="InterPro" id="IPR018061">
    <property type="entry name" value="Retropepsins"/>
</dbReference>
<dbReference type="InterPro" id="IPR008916">
    <property type="entry name" value="Retrov_capsid_C"/>
</dbReference>
<dbReference type="InterPro" id="IPR008919">
    <property type="entry name" value="Retrov_capsid_N"/>
</dbReference>
<dbReference type="InterPro" id="IPR043128">
    <property type="entry name" value="Rev_trsase/Diguanyl_cyclase"/>
</dbReference>
<dbReference type="InterPro" id="IPR012337">
    <property type="entry name" value="RNaseH-like_sf"/>
</dbReference>
<dbReference type="InterPro" id="IPR002156">
    <property type="entry name" value="RNaseH_domain"/>
</dbReference>
<dbReference type="InterPro" id="IPR036397">
    <property type="entry name" value="RNaseH_sf"/>
</dbReference>
<dbReference type="InterPro" id="IPR000477">
    <property type="entry name" value="RT_dom"/>
</dbReference>
<dbReference type="InterPro" id="IPR001878">
    <property type="entry name" value="Znf_CCHC"/>
</dbReference>
<dbReference type="InterPro" id="IPR036875">
    <property type="entry name" value="Znf_CCHC_sf"/>
</dbReference>
<dbReference type="PANTHER" id="PTHR41694">
    <property type="entry name" value="ENDOGENOUS RETROVIRUS GROUP K MEMBER POL PROTEIN"/>
    <property type="match status" value="1"/>
</dbReference>
<dbReference type="PANTHER" id="PTHR41694:SF3">
    <property type="entry name" value="RNA-DIRECTED DNA POLYMERASE-RELATED"/>
    <property type="match status" value="1"/>
</dbReference>
<dbReference type="Pfam" id="PF00692">
    <property type="entry name" value="dUTPase"/>
    <property type="match status" value="1"/>
</dbReference>
<dbReference type="Pfam" id="PF00607">
    <property type="entry name" value="Gag_p24"/>
    <property type="match status" value="1"/>
</dbReference>
<dbReference type="Pfam" id="PF19317">
    <property type="entry name" value="Gag_p24_C"/>
    <property type="match status" value="1"/>
</dbReference>
<dbReference type="Pfam" id="PF02022">
    <property type="entry name" value="Integrase_Zn"/>
    <property type="match status" value="1"/>
</dbReference>
<dbReference type="Pfam" id="PF00075">
    <property type="entry name" value="RNase_H"/>
    <property type="match status" value="1"/>
</dbReference>
<dbReference type="Pfam" id="PF00665">
    <property type="entry name" value="rve"/>
    <property type="match status" value="1"/>
</dbReference>
<dbReference type="Pfam" id="PF00077">
    <property type="entry name" value="RVP"/>
    <property type="match status" value="1"/>
</dbReference>
<dbReference type="Pfam" id="PF00078">
    <property type="entry name" value="RVT_1"/>
    <property type="match status" value="1"/>
</dbReference>
<dbReference type="Pfam" id="PF00098">
    <property type="entry name" value="zf-CCHC"/>
    <property type="match status" value="2"/>
</dbReference>
<dbReference type="SMART" id="SM00343">
    <property type="entry name" value="ZnF_C2HC"/>
    <property type="match status" value="2"/>
</dbReference>
<dbReference type="SUPFAM" id="SSF50630">
    <property type="entry name" value="Acid proteases"/>
    <property type="match status" value="1"/>
</dbReference>
<dbReference type="SUPFAM" id="SSF50122">
    <property type="entry name" value="DNA-binding domain of retroviral integrase"/>
    <property type="match status" value="1"/>
</dbReference>
<dbReference type="SUPFAM" id="SSF56672">
    <property type="entry name" value="DNA/RNA polymerases"/>
    <property type="match status" value="1"/>
</dbReference>
<dbReference type="SUPFAM" id="SSF51283">
    <property type="entry name" value="dUTPase-like"/>
    <property type="match status" value="1"/>
</dbReference>
<dbReference type="SUPFAM" id="SSF46919">
    <property type="entry name" value="N-terminal Zn binding domain of HIV integrase"/>
    <property type="match status" value="1"/>
</dbReference>
<dbReference type="SUPFAM" id="SSF47353">
    <property type="entry name" value="Retrovirus capsid dimerization domain-like"/>
    <property type="match status" value="1"/>
</dbReference>
<dbReference type="SUPFAM" id="SSF47943">
    <property type="entry name" value="Retrovirus capsid protein, N-terminal core domain"/>
    <property type="match status" value="1"/>
</dbReference>
<dbReference type="SUPFAM" id="SSF57756">
    <property type="entry name" value="Retrovirus zinc finger-like domains"/>
    <property type="match status" value="1"/>
</dbReference>
<dbReference type="SUPFAM" id="SSF53098">
    <property type="entry name" value="Ribonuclease H-like"/>
    <property type="match status" value="2"/>
</dbReference>
<dbReference type="PROSITE" id="PS50175">
    <property type="entry name" value="ASP_PROT_RETROV"/>
    <property type="match status" value="1"/>
</dbReference>
<dbReference type="PROSITE" id="PS00141">
    <property type="entry name" value="ASP_PROTEASE"/>
    <property type="match status" value="1"/>
</dbReference>
<dbReference type="PROSITE" id="PS50994">
    <property type="entry name" value="INTEGRASE"/>
    <property type="match status" value="1"/>
</dbReference>
<dbReference type="PROSITE" id="PS51027">
    <property type="entry name" value="INTEGRASE_DBD"/>
    <property type="match status" value="1"/>
</dbReference>
<dbReference type="PROSITE" id="PS50879">
    <property type="entry name" value="RNASE_H_1"/>
    <property type="match status" value="1"/>
</dbReference>
<dbReference type="PROSITE" id="PS50878">
    <property type="entry name" value="RT_POL"/>
    <property type="match status" value="1"/>
</dbReference>
<dbReference type="PROSITE" id="PS50158">
    <property type="entry name" value="ZF_CCHC"/>
    <property type="match status" value="2"/>
</dbReference>
<dbReference type="PROSITE" id="PS50876">
    <property type="entry name" value="ZF_INTEGRASE"/>
    <property type="match status" value="1"/>
</dbReference>
<comment type="function">
    <molecule>Isoform Gag-Pol polyprotein</molecule>
    <text evidence="2">Mediates, with Gag polyprotein, the essential events in virion assembly, including binding the plasma membrane, making the protein-protein interactions necessary to create spherical particles, recruiting the viral Env proteins, and packaging the genomic RNA via direct interactions with the RNA packaging sequence.</text>
</comment>
<comment type="function">
    <molecule>Matrix protein p16</molecule>
    <text evidence="3">Targets the polyprotein to the plasma membrane.</text>
</comment>
<comment type="function">
    <molecule>Capsid protein p25</molecule>
    <text evidence="2">Forms the core that encapsulates the genomic RNA-nucleocapsid complex in the virion.</text>
</comment>
<comment type="function">
    <molecule>Nucleocapsid protein p14</molecule>
    <text evidence="2">Encapsulates and protects viral dimeric unspliced genomic RNA (gRNA). Binds these RNAs through its zinc fingers. Acts as a nucleic acid chaperone which is involved in rearrangement of nucleic acid secondary structure during gRNA retrotranscription. Also facilitates template switch leading to recombination.</text>
</comment>
<comment type="function">
    <molecule>Protease</molecule>
    <text evidence="6">The aspartyl protease mediates proteolytic cleavages of Gag and Gag-Pol polyproteins during or shortly after the release of the virion from the plasma membrane. Cleavages take place as an ordered, step-wise cascade to yield mature proteins. This process is called maturation. Displays maximal activity during the budding process just prior to particle release from the cell.</text>
</comment>
<comment type="function">
    <molecule>Reverse transcriptase/ribonuclease H</molecule>
    <text evidence="7">RT is a multifunctional enzyme that converts the viral dimeric RNA genome into dsDNA in the cytoplasm, shortly after virus entry into the cell. This enzyme displays a DNA polymerase activity that can copy either DNA or RNA templates, and a ribonuclease H (RNase H) activity that cleaves the RNA strand of RNA-DNA heteroduplexes in a partially processive 3' to 5' endonucleasic mode. Conversion of viral genomic RNA into dsDNA requires many steps. A tRNA-Trp binds to the primer-binding site (PBS) situated at the 5' end of the viral RNA. RT uses the 3' end of the tRNA primer to perfom a short round of RNA-dependent minus-strand DNA synthesis. The reading proceeds through the U5 region and ends after the repeated (R) region which is present at both ends of viral RNA. The portion of the RNA-DNA heteroduplex is digested by the RNase H, resulting in a ssDNA product attached to the tRNA primer. This ssDNA/tRNA hybridizes with the identical R region situated at the 3' end of viral RNA. This template exchange, known as minus-strand DNA strong stop transfer, can be either intra- or intermolecular. RT uses the 3' end of this newly synthesized short ssDNA to perfom the RNA-dependent minus-strand DNA synthesis of the whole template. RNase H digests the RNA template except for a polypurine tract (PPT) situated at the 5' end of the genome. It is not clear if both polymerase and RNase H activities are simultaneous. RNase H probably can proceed both in a polymerase-dependent (RNA cut into small fragments by the same RT performing DNA synthesis) and a polymerase-independent mode (cleavage of remaining RNA fragments by free RTs). Secondly, RT performs DNA-directed plus-strand DNA synthesis using the PPT that has not been removed by RNase H as primers. PPT and tRNA primers are then removed by RNase H. The 3' and 5' ssDNA PBS regions hybridize to form a circular dsDNA intermediate. Strand displacement synthesis by RT to the PBS and PPT ends produces a blunt ended, linear dsDNA copy of the viral genome that includes long terminal repeats (LTRs) at both ends.</text>
</comment>
<comment type="function">
    <molecule>Integrase</molecule>
    <text evidence="1">Catalyzes viral DNA integration into the host chromosome, by performing a series of DNA cutting and joining reactions.</text>
</comment>
<comment type="catalytic activity">
    <reaction>
        <text>3'-end directed exonucleolytic cleavage of viral RNA-DNA hybrid.</text>
        <dbReference type="EC" id="3.1.13.2"/>
    </reaction>
</comment>
<comment type="catalytic activity">
    <reaction>
        <text>dUTP + H2O = dUMP + diphosphate + H(+)</text>
        <dbReference type="Rhea" id="RHEA:10248"/>
        <dbReference type="ChEBI" id="CHEBI:15377"/>
        <dbReference type="ChEBI" id="CHEBI:15378"/>
        <dbReference type="ChEBI" id="CHEBI:33019"/>
        <dbReference type="ChEBI" id="CHEBI:61555"/>
        <dbReference type="ChEBI" id="CHEBI:246422"/>
        <dbReference type="EC" id="3.6.1.23"/>
    </reaction>
</comment>
<comment type="catalytic activity">
    <reaction evidence="7">
        <text>DNA(n) + a 2'-deoxyribonucleoside 5'-triphosphate = DNA(n+1) + diphosphate</text>
        <dbReference type="Rhea" id="RHEA:22508"/>
        <dbReference type="Rhea" id="RHEA-COMP:17339"/>
        <dbReference type="Rhea" id="RHEA-COMP:17340"/>
        <dbReference type="ChEBI" id="CHEBI:33019"/>
        <dbReference type="ChEBI" id="CHEBI:61560"/>
        <dbReference type="ChEBI" id="CHEBI:173112"/>
        <dbReference type="EC" id="2.7.7.49"/>
    </reaction>
</comment>
<comment type="catalytic activity">
    <reaction evidence="7">
        <text>DNA(n) + a 2'-deoxyribonucleoside 5'-triphosphate = DNA(n+1) + diphosphate</text>
        <dbReference type="Rhea" id="RHEA:22508"/>
        <dbReference type="Rhea" id="RHEA-COMP:17339"/>
        <dbReference type="Rhea" id="RHEA-COMP:17340"/>
        <dbReference type="ChEBI" id="CHEBI:33019"/>
        <dbReference type="ChEBI" id="CHEBI:61560"/>
        <dbReference type="ChEBI" id="CHEBI:173112"/>
        <dbReference type="EC" id="2.7.7.7"/>
    </reaction>
</comment>
<comment type="catalytic activity">
    <reaction evidence="8">
        <text>Endonucleolytic cleavage to 5'-phosphomonoester.</text>
        <dbReference type="EC" id="3.1.26.4"/>
    </reaction>
</comment>
<comment type="cofactor">
    <cofactor evidence="7">
        <name>Mg(2+)</name>
        <dbReference type="ChEBI" id="CHEBI:18420"/>
    </cofactor>
    <text evidence="7">The RT polymerase active site binds 2 magnesium ions.</text>
</comment>
<comment type="subunit">
    <molecule>Integrase</molecule>
    <text evidence="4">Homotetramer; further associates as a homohexadecamer.</text>
</comment>
<comment type="subcellular location">
    <molecule>Matrix protein p16</molecule>
    <subcellularLocation>
        <location evidence="12">Virion</location>
    </subcellularLocation>
</comment>
<comment type="subcellular location">
    <molecule>Capsid protein p25</molecule>
    <subcellularLocation>
        <location evidence="12">Virion</location>
    </subcellularLocation>
</comment>
<comment type="subcellular location">
    <molecule>Nucleocapsid protein p14</molecule>
    <subcellularLocation>
        <location evidence="12">Virion</location>
    </subcellularLocation>
</comment>
<comment type="alternative products">
    <event type="ribosomal frameshifting"/>
    <isoform>
        <id>P23426-1</id>
        <name>Gag-Pol polyprotein</name>
        <sequence type="displayed"/>
    </isoform>
    <isoform>
        <id>P23424-1</id>
        <name>Gag polyprotein</name>
        <sequence type="external"/>
    </isoform>
</comment>
<comment type="PTM">
    <molecule>Isoform Gag-Pol polyprotein</molecule>
    <text evidence="12">Specific enzymatic cleavages by the viral protease yield mature proteins.</text>
</comment>
<comment type="miscellaneous">
    <text evidence="7">The reverse transcriptase is an error-prone enzyme that lacks a proof-reading function. High mutations rate is a direct consequence of this characteristic. RT also displays frequent template switching leading to high recombination rate. Recombination mostly occurs between homologous regions of the two copackaged RNA genomes. If these two RNA molecules derive from different viral strains, reverse transcription will give rise to highly recombinated proviral DNAs.</text>
</comment>
<comment type="miscellaneous">
    <molecule>Isoform Gag-Pol polyprotein</molecule>
    <text evidence="4">Produced by a -1 ribosomal frameshifting between gag and pol.</text>
</comment>
<comment type="similarity">
    <text evidence="12">Belongs to the retroviral Pol polyprotein family.</text>
</comment>
<comment type="sequence caution" evidence="12">
    <conflict type="erroneous gene model prediction">
        <sequence resource="EMBL-CDS" id="AAA17524"/>
    </conflict>
</comment>
<evidence type="ECO:0000250" key="1">
    <source>
        <dbReference type="UniProtKB" id="P03370"/>
    </source>
</evidence>
<evidence type="ECO:0000250" key="2">
    <source>
        <dbReference type="UniProtKB" id="P04585"/>
    </source>
</evidence>
<evidence type="ECO:0000250" key="3">
    <source>
        <dbReference type="UniProtKB" id="P12497"/>
    </source>
</evidence>
<evidence type="ECO:0000250" key="4">
    <source>
        <dbReference type="UniProtKB" id="P35956"/>
    </source>
</evidence>
<evidence type="ECO:0000255" key="5">
    <source>
        <dbReference type="PROSITE-ProRule" id="PRU00047"/>
    </source>
</evidence>
<evidence type="ECO:0000255" key="6">
    <source>
        <dbReference type="PROSITE-ProRule" id="PRU00275"/>
    </source>
</evidence>
<evidence type="ECO:0000255" key="7">
    <source>
        <dbReference type="PROSITE-ProRule" id="PRU00405"/>
    </source>
</evidence>
<evidence type="ECO:0000255" key="8">
    <source>
        <dbReference type="PROSITE-ProRule" id="PRU00408"/>
    </source>
</evidence>
<evidence type="ECO:0000255" key="9">
    <source>
        <dbReference type="PROSITE-ProRule" id="PRU00450"/>
    </source>
</evidence>
<evidence type="ECO:0000255" key="10">
    <source>
        <dbReference type="PROSITE-ProRule" id="PRU00457"/>
    </source>
</evidence>
<evidence type="ECO:0000255" key="11">
    <source>
        <dbReference type="PROSITE-ProRule" id="PRU00506"/>
    </source>
</evidence>
<evidence type="ECO:0000305" key="12"/>
<sequence length="1506" mass="171964">MAKQGSKEKKGYPELKEVIKATCKIRVGPGKETLTEGNCLWALKTIDFIFEDLKTEPWTITKMYTVWDRLKGLTPEETSKREFASLQATLACIMCSQMGMKPETVQAAKGIISMKEGLQENKEAKGEKVEQLYPNLEKHREVYPIVNLQAGGRSWKAVESVVFQQLQTVAMQHGLVSEDFERQLAYYATTWTSKDILEVLAMMPGNRAQKELIQGKLNEEAERWVRQNPPGPNVLTVDQIMGVGQTNQQASQANMDQARQICRQWVITALRSVRHMSHRPGNPMLVKQKNTESYEDFIARLLEAIDAEPVTDPIKTYLKVTLSYTNASTDCQKQMDRTLGTRVQQATVEEKMQACRDVGSEGFKMQLLAQALRPQGKAGHKGVNQKCYNCGKPGHLARQCRQGIICHHCGKRGHMQKDCRQKKQQGKQQEGATCGAVRAPYVVTEAPPKIEIKVGTRWKKLLVDTGADKTIVTSHDMSGIPKGRIILQGIGGIIEGEKWEQVHLQYKDKIIRGTIVVLATSPVEVLGRDNMSELGIGLIMANLEEKKIPITEVRLKEGCKGPHIAQWPLTQEKLEGLKEIVDRLEKEGKVGRAPPHWTCNTPIFCIKKKSGKWRMLIDFRELNKQTEDLAEAQLGLPHPGGLQRKKHVTILDIGDAYFTIPLYEPYRQYTCFTMLSPNNLGPCVRYYWKVLPQGWKLSPSVYQFTMQKILRGWIEEHPMIQFGIYMDDIYIGSDLGLEEHRGIVNELASYIAQYGFMLPEDKRQEGYPAKWLGFELHPEKWKFQKHTLPEITEGPITLNKLQKLVGDLVWRQSLIGKSIPNILKLMEGDRALQSERYIESIHVREWEACRQKLKEMEGNYYDEEKDIYGQLDWGNKAIEYIVFQEKGKPLWVNVVHSIKNLSQAQQIIKAAQKLTQEVIIRTGKIPWILLPGREEDWILELQMGNINWMPSFWSCYKGSVRWKKRNVIAEVVSGPTYYTDGGKKNGRGSLGYIASTGEKFRIYEEGTNQQLELRAIEEACKQGPEKMNIVTDSRYAYEFMLRNWDEEVIRNPIQARIMELMHNKEKIGVHWVPGHKGIPQNEEIDRYISEIFLAKEGRGILQKRAEDAGYDLICPQEISIPAGQVKRIAIDLKINLKKDQWAMIGTKSSFANKGVFVQGGIIDSGYQGTIQVVIYNSNNKEVVIPQGRKFAQLILMPLIHEELEPWGETRKTERGEQGFGSTGMYWIENIPLAEEEHNKWHQDAVSLHLEFGIPRTAAEDIVQQCDVCQENKMPSTLRGSNKRGIDHWQVDYTHYEDKIILVWVETNSGLIYAERVKGETGQEFRVQTMKWYAMFAPKSLQSDNGPAFVAESTQLLMKYLGIEHTTGIPWNPQSQALVERTHQTLKNTLEKLIPMFNAFESALAGTLITLNIKRKGGLGTSPMDIFIFNKEQQRIQQQSKSKQEKIRFCYYRTRKRGHPGEWQGPTQVLWGGDGAIVVKDRGTDRYLVIANKDVKFIPPPKEIQKE</sequence>
<feature type="chain" id="PRO_0000443362" description="Matrix protein p16">
    <location>
        <begin position="1"/>
        <end position="143"/>
    </location>
</feature>
<feature type="chain" id="PRO_0000443363" description="Capsid protein p25">
    <location>
        <begin position="144"/>
        <end position="363"/>
    </location>
</feature>
<feature type="chain" id="PRO_0000443364" description="Nucleocapsid protein p14">
    <location>
        <begin position="364"/>
        <end position="442"/>
    </location>
</feature>
<feature type="chain" id="PRO_0000038861" description="Protease">
    <location>
        <begin position="443"/>
        <end position="540"/>
    </location>
</feature>
<feature type="chain" id="PRO_0000038862" description="Reverse transcriptase/ribonuclease H">
    <location>
        <begin position="541"/>
        <end position="1091"/>
    </location>
</feature>
<feature type="chain" id="PRO_0000038863" description="Deoxyuridine 5'-triphosphate nucleotidohydrolase">
    <location>
        <begin position="1092"/>
        <end position="1225"/>
    </location>
</feature>
<feature type="chain" id="PRO_0000038864" description="Integrase">
    <location>
        <begin position="1226"/>
        <end position="1506"/>
    </location>
</feature>
<feature type="domain" description="Peptidase A2" evidence="6">
    <location>
        <begin position="459"/>
        <end position="530"/>
    </location>
</feature>
<feature type="domain" description="Reverse transcriptase" evidence="7">
    <location>
        <begin position="587"/>
        <end position="776"/>
    </location>
</feature>
<feature type="domain" description="RNase H type-1" evidence="8">
    <location>
        <begin position="971"/>
        <end position="1093"/>
    </location>
</feature>
<feature type="domain" description="Integrase catalytic" evidence="10">
    <location>
        <begin position="1270"/>
        <end position="1430"/>
    </location>
</feature>
<feature type="zinc finger region" description="CCHC-type 1" evidence="5">
    <location>
        <begin position="385"/>
        <end position="402"/>
    </location>
</feature>
<feature type="zinc finger region" description="CCHC-type 2" evidence="5">
    <location>
        <begin position="404"/>
        <end position="421"/>
    </location>
</feature>
<feature type="zinc finger region" description="Integrase-type" evidence="9">
    <location>
        <begin position="1228"/>
        <end position="1269"/>
    </location>
</feature>
<feature type="DNA-binding region" description="Integrase-type" evidence="11">
    <location>
        <begin position="1447"/>
        <end position="1499"/>
    </location>
</feature>
<feature type="active site" description="Protease; shared with dimeric partner" evidence="6">
    <location>
        <position position="464"/>
    </location>
</feature>
<feature type="binding site" evidence="7">
    <location>
        <position position="652"/>
    </location>
    <ligand>
        <name>Mg(2+)</name>
        <dbReference type="ChEBI" id="CHEBI:18420"/>
        <label>1</label>
        <note>catalytic; for reverse transcriptase activity</note>
    </ligand>
</feature>
<feature type="binding site" evidence="7">
    <location>
        <position position="727"/>
    </location>
    <ligand>
        <name>Mg(2+)</name>
        <dbReference type="ChEBI" id="CHEBI:18420"/>
        <label>1</label>
        <note>catalytic; for reverse transcriptase activity</note>
    </ligand>
</feature>
<feature type="binding site" evidence="7">
    <location>
        <position position="728"/>
    </location>
    <ligand>
        <name>Mg(2+)</name>
        <dbReference type="ChEBI" id="CHEBI:18420"/>
        <label>1</label>
        <note>catalytic; for reverse transcriptase activity</note>
    </ligand>
</feature>
<feature type="binding site" evidence="8">
    <location>
        <position position="980"/>
    </location>
    <ligand>
        <name>Mg(2+)</name>
        <dbReference type="ChEBI" id="CHEBI:18420"/>
        <label>2</label>
        <note>catalytic; for RNase H activity</note>
    </ligand>
</feature>
<feature type="binding site" evidence="8">
    <location>
        <position position="1012"/>
    </location>
    <ligand>
        <name>Mg(2+)</name>
        <dbReference type="ChEBI" id="CHEBI:18420"/>
        <label>2</label>
        <note>catalytic; for RNase H activity</note>
    </ligand>
</feature>
<feature type="binding site" evidence="8">
    <location>
        <position position="1032"/>
    </location>
    <ligand>
        <name>Mg(2+)</name>
        <dbReference type="ChEBI" id="CHEBI:18420"/>
        <label>2</label>
        <note>catalytic; for RNase H activity</note>
    </ligand>
</feature>
<feature type="binding site" evidence="8">
    <location>
        <position position="1085"/>
    </location>
    <ligand>
        <name>Mg(2+)</name>
        <dbReference type="ChEBI" id="CHEBI:18420"/>
        <label>2</label>
        <note>catalytic; for RNase H activity</note>
    </ligand>
</feature>
<feature type="binding site" evidence="9">
    <location>
        <position position="1237"/>
    </location>
    <ligand>
        <name>Zn(2+)</name>
        <dbReference type="ChEBI" id="CHEBI:29105"/>
    </ligand>
</feature>
<feature type="binding site" evidence="9">
    <location>
        <position position="1241"/>
    </location>
    <ligand>
        <name>Zn(2+)</name>
        <dbReference type="ChEBI" id="CHEBI:29105"/>
    </ligand>
</feature>
<feature type="binding site" evidence="9">
    <location>
        <position position="1265"/>
    </location>
    <ligand>
        <name>Zn(2+)</name>
        <dbReference type="ChEBI" id="CHEBI:29105"/>
    </ligand>
</feature>
<feature type="binding site" evidence="9">
    <location>
        <position position="1268"/>
    </location>
    <ligand>
        <name>Zn(2+)</name>
        <dbReference type="ChEBI" id="CHEBI:29105"/>
    </ligand>
</feature>
<feature type="binding site" evidence="10">
    <location>
        <position position="1291"/>
    </location>
    <ligand>
        <name>Mg(2+)</name>
        <dbReference type="ChEBI" id="CHEBI:18420"/>
        <label>3</label>
        <note>catalytic; for integrase activity</note>
    </ligand>
</feature>
<feature type="binding site" evidence="10">
    <location>
        <position position="1343"/>
    </location>
    <ligand>
        <name>Mg(2+)</name>
        <dbReference type="ChEBI" id="CHEBI:18420"/>
        <label>3</label>
        <note>catalytic; for integrase activity</note>
    </ligand>
</feature>
<feature type="binding site" evidence="12">
    <location>
        <position position="1379"/>
    </location>
    <ligand>
        <name>Mg(2+)</name>
        <dbReference type="ChEBI" id="CHEBI:18420"/>
        <label>3</label>
        <note>catalytic; for integrase activity</note>
    </ligand>
</feature>
<organismHost>
    <name type="scientific">Ovis aries</name>
    <name type="common">Sheep</name>
    <dbReference type="NCBI Taxonomy" id="9940"/>
</organismHost>
<keyword id="KW-0064">Aspartyl protease</keyword>
<keyword id="KW-0167">Capsid protein</keyword>
<keyword id="KW-0229">DNA integration</keyword>
<keyword id="KW-0233">DNA recombination</keyword>
<keyword id="KW-0238">DNA-binding</keyword>
<keyword id="KW-0255">Endonuclease</keyword>
<keyword id="KW-0378">Hydrolase</keyword>
<keyword id="KW-0460">Magnesium</keyword>
<keyword id="KW-0479">Metal-binding</keyword>
<keyword id="KW-0511">Multifunctional enzyme</keyword>
<keyword id="KW-0540">Nuclease</keyword>
<keyword id="KW-0546">Nucleotide metabolism</keyword>
<keyword id="KW-0548">Nucleotidyltransferase</keyword>
<keyword id="KW-0645">Protease</keyword>
<keyword id="KW-0677">Repeat</keyword>
<keyword id="KW-0688">Ribosomal frameshifting</keyword>
<keyword id="KW-0695">RNA-directed DNA polymerase</keyword>
<keyword id="KW-0808">Transferase</keyword>
<keyword id="KW-1179">Viral genome integration</keyword>
<keyword id="KW-0946">Virion</keyword>
<keyword id="KW-1160">Virus entry into host cell</keyword>
<keyword id="KW-0862">Zinc</keyword>
<keyword id="KW-0863">Zinc-finger</keyword>
<protein>
    <recommendedName>
        <fullName>Gag-Pol polyprotein</fullName>
    </recommendedName>
    <component>
        <recommendedName>
            <fullName>Matrix protein p16</fullName>
        </recommendedName>
    </component>
    <component>
        <recommendedName>
            <fullName>Capsid protein p25</fullName>
        </recommendedName>
    </component>
    <component>
        <recommendedName>
            <fullName>Nucleocapsid protein p14</fullName>
        </recommendedName>
    </component>
    <component>
        <recommendedName>
            <fullName>Protease</fullName>
        </recommendedName>
        <alternativeName>
            <fullName>Retropepsin</fullName>
            <ecNumber evidence="6">3.4.23.-</ecNumber>
        </alternativeName>
    </component>
    <component>
        <recommendedName>
            <fullName>Reverse transcriptase/ribonuclease H</fullName>
            <shortName>RT</shortName>
            <ecNumber evidence="7">2.7.7.49</ecNumber>
            <ecNumber evidence="7">2.7.7.7</ecNumber>
            <ecNumber evidence="8">3.1.26.4</ecNumber>
        </recommendedName>
        <alternativeName>
            <fullName>Exoribonuclease H</fullName>
            <ecNumber>3.1.13.2</ecNumber>
        </alternativeName>
    </component>
    <component>
        <recommendedName>
            <fullName>Deoxyuridine 5'-triphosphate nucleotidohydrolase</fullName>
            <shortName>dUTPase</shortName>
            <ecNumber>3.6.1.23</ecNumber>
        </recommendedName>
    </component>
    <component>
        <recommendedName>
            <fullName>Integrase</fullName>
            <shortName>IN</shortName>
            <ecNumber evidence="1">2.7.7.-</ecNumber>
            <ecNumber evidence="1">3.1.-.-</ecNumber>
        </recommendedName>
    </component>
</protein>
<gene>
    <name type="primary">pol</name>
</gene>
<proteinExistence type="inferred from homology"/>